<name>COX1_XENLA</name>
<proteinExistence type="inferred from homology"/>
<dbReference type="EC" id="7.1.1.9"/>
<dbReference type="EMBL" id="M10217">
    <property type="protein sequence ID" value="AAA66460.1"/>
    <property type="molecule type" value="Genomic_DNA"/>
</dbReference>
<dbReference type="PIR" id="A00466">
    <property type="entry name" value="ODXL1"/>
</dbReference>
<dbReference type="SMR" id="P00398"/>
<dbReference type="KEGG" id="xla:2642088"/>
<dbReference type="CTD" id="4512"/>
<dbReference type="OrthoDB" id="10002679at2759"/>
<dbReference type="UniPathway" id="UPA00705"/>
<dbReference type="Proteomes" id="UP000186698">
    <property type="component" value="Mitochondrion MT"/>
</dbReference>
<dbReference type="Bgee" id="2642088">
    <property type="expression patterns" value="Expressed in egg cell and 19 other cell types or tissues"/>
</dbReference>
<dbReference type="GO" id="GO:0005743">
    <property type="term" value="C:mitochondrial inner membrane"/>
    <property type="evidence" value="ECO:0007669"/>
    <property type="project" value="UniProtKB-SubCell"/>
</dbReference>
<dbReference type="GO" id="GO:0045277">
    <property type="term" value="C:respiratory chain complex IV"/>
    <property type="evidence" value="ECO:0000250"/>
    <property type="project" value="UniProtKB"/>
</dbReference>
<dbReference type="GO" id="GO:0004129">
    <property type="term" value="F:cytochrome-c oxidase activity"/>
    <property type="evidence" value="ECO:0007669"/>
    <property type="project" value="UniProtKB-EC"/>
</dbReference>
<dbReference type="GO" id="GO:0020037">
    <property type="term" value="F:heme binding"/>
    <property type="evidence" value="ECO:0007669"/>
    <property type="project" value="InterPro"/>
</dbReference>
<dbReference type="GO" id="GO:0046872">
    <property type="term" value="F:metal ion binding"/>
    <property type="evidence" value="ECO:0007669"/>
    <property type="project" value="UniProtKB-KW"/>
</dbReference>
<dbReference type="GO" id="GO:0009060">
    <property type="term" value="P:aerobic respiration"/>
    <property type="evidence" value="ECO:0000318"/>
    <property type="project" value="GO_Central"/>
</dbReference>
<dbReference type="GO" id="GO:0015990">
    <property type="term" value="P:electron transport coupled proton transport"/>
    <property type="evidence" value="ECO:0007669"/>
    <property type="project" value="TreeGrafter"/>
</dbReference>
<dbReference type="GO" id="GO:0006123">
    <property type="term" value="P:mitochondrial electron transport, cytochrome c to oxygen"/>
    <property type="evidence" value="ECO:0007669"/>
    <property type="project" value="TreeGrafter"/>
</dbReference>
<dbReference type="GO" id="GO:0022904">
    <property type="term" value="P:respiratory electron transport chain"/>
    <property type="evidence" value="ECO:0000318"/>
    <property type="project" value="GO_Central"/>
</dbReference>
<dbReference type="CDD" id="cd01663">
    <property type="entry name" value="Cyt_c_Oxidase_I"/>
    <property type="match status" value="1"/>
</dbReference>
<dbReference type="FunFam" id="1.20.210.10:FF:000001">
    <property type="entry name" value="Cytochrome c oxidase subunit 1"/>
    <property type="match status" value="1"/>
</dbReference>
<dbReference type="Gene3D" id="1.20.210.10">
    <property type="entry name" value="Cytochrome c oxidase-like, subunit I domain"/>
    <property type="match status" value="1"/>
</dbReference>
<dbReference type="InterPro" id="IPR023616">
    <property type="entry name" value="Cyt_c_oxase-like_su1_dom"/>
</dbReference>
<dbReference type="InterPro" id="IPR036927">
    <property type="entry name" value="Cyt_c_oxase-like_su1_sf"/>
</dbReference>
<dbReference type="InterPro" id="IPR000883">
    <property type="entry name" value="Cyt_C_Oxase_1"/>
</dbReference>
<dbReference type="InterPro" id="IPR023615">
    <property type="entry name" value="Cyt_c_Oxase_su1_BS"/>
</dbReference>
<dbReference type="InterPro" id="IPR033944">
    <property type="entry name" value="Cyt_c_oxase_su1_dom"/>
</dbReference>
<dbReference type="PANTHER" id="PTHR10422">
    <property type="entry name" value="CYTOCHROME C OXIDASE SUBUNIT 1"/>
    <property type="match status" value="1"/>
</dbReference>
<dbReference type="PANTHER" id="PTHR10422:SF18">
    <property type="entry name" value="CYTOCHROME C OXIDASE SUBUNIT 1"/>
    <property type="match status" value="1"/>
</dbReference>
<dbReference type="Pfam" id="PF00115">
    <property type="entry name" value="COX1"/>
    <property type="match status" value="1"/>
</dbReference>
<dbReference type="PRINTS" id="PR01165">
    <property type="entry name" value="CYCOXIDASEI"/>
</dbReference>
<dbReference type="SUPFAM" id="SSF81442">
    <property type="entry name" value="Cytochrome c oxidase subunit I-like"/>
    <property type="match status" value="1"/>
</dbReference>
<dbReference type="PROSITE" id="PS50855">
    <property type="entry name" value="COX1"/>
    <property type="match status" value="1"/>
</dbReference>
<dbReference type="PROSITE" id="PS00077">
    <property type="entry name" value="COX1_CUB"/>
    <property type="match status" value="1"/>
</dbReference>
<keyword id="KW-0106">Calcium</keyword>
<keyword id="KW-0186">Copper</keyword>
<keyword id="KW-0249">Electron transport</keyword>
<keyword id="KW-0349">Heme</keyword>
<keyword id="KW-0408">Iron</keyword>
<keyword id="KW-0460">Magnesium</keyword>
<keyword id="KW-0472">Membrane</keyword>
<keyword id="KW-0479">Metal-binding</keyword>
<keyword id="KW-0496">Mitochondrion</keyword>
<keyword id="KW-0999">Mitochondrion inner membrane</keyword>
<keyword id="KW-1185">Reference proteome</keyword>
<keyword id="KW-0679">Respiratory chain</keyword>
<keyword id="KW-0915">Sodium</keyword>
<keyword id="KW-1278">Translocase</keyword>
<keyword id="KW-0812">Transmembrane</keyword>
<keyword id="KW-1133">Transmembrane helix</keyword>
<keyword id="KW-0813">Transport</keyword>
<comment type="function">
    <text evidence="3">Component of the cytochrome c oxidase, the last enzyme in the mitochondrial electron transport chain which drives oxidative phosphorylation. The respiratory chain contains 3 multisubunit complexes succinate dehydrogenase (complex II, CII), ubiquinol-cytochrome c oxidoreductase (cytochrome b-c1 complex, complex III, CIII) and cytochrome c oxidase (complex IV, CIV), that cooperate to transfer electrons derived from NADH and succinate to molecular oxygen, creating an electrochemical gradient over the inner membrane that drives transmembrane transport and the ATP synthase. Cytochrome c oxidase is the component of the respiratory chain that catalyzes the reduction of oxygen to water. Electrons originating from reduced cytochrome c in the intermembrane space (IMS) are transferred via the dinuclear copper A center (CU(A)) of subunit 2 and heme A of subunit 1 to the active site in subunit 1, a binuclear center (BNC) formed by heme A3 and copper B (CU(B)). The BNC reduces molecular oxygen to 2 water molecules using 4 electrons from cytochrome c in the IMS and 4 protons from the mitochondrial matrix.</text>
</comment>
<comment type="catalytic activity">
    <reaction evidence="3">
        <text>4 Fe(II)-[cytochrome c] + O2 + 8 H(+)(in) = 4 Fe(III)-[cytochrome c] + 2 H2O + 4 H(+)(out)</text>
        <dbReference type="Rhea" id="RHEA:11436"/>
        <dbReference type="Rhea" id="RHEA-COMP:10350"/>
        <dbReference type="Rhea" id="RHEA-COMP:14399"/>
        <dbReference type="ChEBI" id="CHEBI:15377"/>
        <dbReference type="ChEBI" id="CHEBI:15378"/>
        <dbReference type="ChEBI" id="CHEBI:15379"/>
        <dbReference type="ChEBI" id="CHEBI:29033"/>
        <dbReference type="ChEBI" id="CHEBI:29034"/>
        <dbReference type="EC" id="7.1.1.9"/>
    </reaction>
    <physiologicalReaction direction="left-to-right" evidence="3">
        <dbReference type="Rhea" id="RHEA:11437"/>
    </physiologicalReaction>
</comment>
<comment type="cofactor">
    <cofactor evidence="2">
        <name>heme</name>
        <dbReference type="ChEBI" id="CHEBI:30413"/>
    </cofactor>
    <text evidence="2">Binds 2 heme A groups non-covalently per subunit.</text>
</comment>
<comment type="cofactor">
    <cofactor evidence="2">
        <name>Cu cation</name>
        <dbReference type="ChEBI" id="CHEBI:23378"/>
    </cofactor>
    <text evidence="2">Binds a copper B center.</text>
</comment>
<comment type="pathway">
    <text evidence="3">Energy metabolism; oxidative phosphorylation.</text>
</comment>
<comment type="subunit">
    <text evidence="1 2">Component of the cytochrome c oxidase (complex IV, CIV), a multisubunit enzyme composed of 14 subunits. The complex is composed of a catalytic core of 3 subunits MT-CO1, MT-CO2 and MT-CO3, encoded in the mitochondrial DNA, and 11 supernumerary subunits COX4I, COX5A, COX5B, COX6A, COX6B, COX6C, COX7A, COX7B, COX7C, COX8 and NDUFA4, which are encoded in the nuclear genome. The complex exists as a monomer or a dimer and forms supercomplexes (SCs) in the inner mitochondrial membrane with NADH-ubiquinone oxidoreductase (complex I, CI) and ubiquinol-cytochrome c oxidoreductase (cytochrome b-c1 complex, complex III, CIII), resulting in different assemblies (supercomplex SCI(1)III(2)IV(1) and megacomplex MCI(2)III(2)IV(2)) (By similarity). As a newly synthesized protein, rapidly incorporates into a multi-subunit assembly intermediate in the inner membrane, called MITRAC (mitochondrial translation regulation assembly intermediate of cytochrome c oxidase) complex, whose core components are COA3/MITRAC12 and COX14. Within the MITRAC complex, interacts with COA3 and with SMIM20/MITRAC7; the interaction with SMIM20 stabilizes the newly synthesized MT-CO1 and prevents its premature turnover. Interacts with TMEM177 in a COX20-dependent manner (By similarity).</text>
</comment>
<comment type="subcellular location">
    <subcellularLocation>
        <location evidence="2">Mitochondrion inner membrane</location>
        <topology evidence="2">Multi-pass membrane protein</topology>
    </subcellularLocation>
</comment>
<comment type="similarity">
    <text evidence="4">Belongs to the heme-copper respiratory oxidase family.</text>
</comment>
<gene>
    <name type="primary">mt-co1</name>
    <name type="synonym">coi</name>
    <name type="synonym">coxi</name>
    <name type="synonym">mtco1</name>
</gene>
<protein>
    <recommendedName>
        <fullName>Cytochrome c oxidase subunit 1</fullName>
        <ecNumber>7.1.1.9</ecNumber>
    </recommendedName>
    <alternativeName>
        <fullName>Cytochrome c oxidase polypeptide I</fullName>
    </alternativeName>
</protein>
<reference key="1">
    <citation type="journal article" date="1985" name="J. Biol. Chem.">
        <title>The complete nucleotide sequence of the Xenopus laevis mitochondrial genome.</title>
        <authorList>
            <person name="Roe B.A."/>
            <person name="Ma D.-P."/>
            <person name="Wilson R.K."/>
            <person name="Wong J.F.-H."/>
        </authorList>
    </citation>
    <scope>NUCLEOTIDE SEQUENCE [GENOMIC DNA]</scope>
</reference>
<accession>P00398</accession>
<evidence type="ECO:0000250" key="1">
    <source>
        <dbReference type="UniProtKB" id="P00395"/>
    </source>
</evidence>
<evidence type="ECO:0000250" key="2">
    <source>
        <dbReference type="UniProtKB" id="P00396"/>
    </source>
</evidence>
<evidence type="ECO:0000250" key="3">
    <source>
        <dbReference type="UniProtKB" id="P00401"/>
    </source>
</evidence>
<evidence type="ECO:0000305" key="4"/>
<sequence length="519" mass="57440">MAITRWLFSTNHKDIGTLYLVFGAWAGLVGTALSLLIRAELSQPGTLLGDDQIYNVIVTAHAFIMIFFMVMPIMIGGFGNWLVPLMIGAPDMAFPRMNNMSFWLLPPSFLLLLASSGVEAGAGTGWTVYPPLAGNLAHAGASVDLTIFSLHLAGISSILGAINFITTTINMKPPAMSQYQTPLFVWSVLITAVLLLLSLPVLAAGITMLLTDRNLNTTFFDPAGGGDPVLYQHLFWFFGHPEVYILILPGFGMISHIVTYYSGKKEPFGYMGMVWAMMSIGLLGFIVWAHHMFTVDLNVDTRAYFTSATMIIAIPTGVKVFSWLATMHGGTIKWDAPMLWALGFIFLFTVGGLTGIVLANSSLDIMLHDTYYVVAHFHYVLSMGAVFAIMGGFIHWFPLFTGYTLHETWAKIHFGVMFAGVNLTFFPQHFLGLSAMPRRYSDYPDAYTLWNTVSSIGSLISLVAVIMMMFIIWEAFAAKREVTTYELTSTMLEWLQGCPTPYHTLKTSLVQINHQMIKS</sequence>
<organism>
    <name type="scientific">Xenopus laevis</name>
    <name type="common">African clawed frog</name>
    <dbReference type="NCBI Taxonomy" id="8355"/>
    <lineage>
        <taxon>Eukaryota</taxon>
        <taxon>Metazoa</taxon>
        <taxon>Chordata</taxon>
        <taxon>Craniata</taxon>
        <taxon>Vertebrata</taxon>
        <taxon>Euteleostomi</taxon>
        <taxon>Amphibia</taxon>
        <taxon>Batrachia</taxon>
        <taxon>Anura</taxon>
        <taxon>Pipoidea</taxon>
        <taxon>Pipidae</taxon>
        <taxon>Xenopodinae</taxon>
        <taxon>Xenopus</taxon>
        <taxon>Xenopus</taxon>
    </lineage>
</organism>
<feature type="chain" id="PRO_0000183430" description="Cytochrome c oxidase subunit 1">
    <location>
        <begin position="1"/>
        <end position="519"/>
    </location>
</feature>
<feature type="topological domain" description="Mitochondrial matrix" evidence="2">
    <location>
        <begin position="1"/>
        <end position="11"/>
    </location>
</feature>
<feature type="transmembrane region" description="Helical; Name=I" evidence="2">
    <location>
        <begin position="12"/>
        <end position="40"/>
    </location>
</feature>
<feature type="topological domain" description="Mitochondrial intermembrane" evidence="2">
    <location>
        <begin position="41"/>
        <end position="50"/>
    </location>
</feature>
<feature type="transmembrane region" description="Helical; Name=II" evidence="2">
    <location>
        <begin position="51"/>
        <end position="86"/>
    </location>
</feature>
<feature type="topological domain" description="Mitochondrial matrix" evidence="2">
    <location>
        <begin position="87"/>
        <end position="94"/>
    </location>
</feature>
<feature type="transmembrane region" description="Helical; Name=III" evidence="2">
    <location>
        <begin position="95"/>
        <end position="117"/>
    </location>
</feature>
<feature type="topological domain" description="Mitochondrial intermembrane" evidence="2">
    <location>
        <begin position="118"/>
        <end position="140"/>
    </location>
</feature>
<feature type="transmembrane region" description="Helical; Name=IV" evidence="2">
    <location>
        <begin position="141"/>
        <end position="170"/>
    </location>
</feature>
<feature type="topological domain" description="Mitochondrial matrix" evidence="2">
    <location>
        <begin position="171"/>
        <end position="182"/>
    </location>
</feature>
<feature type="transmembrane region" description="Helical; Name=V" evidence="2">
    <location>
        <begin position="183"/>
        <end position="212"/>
    </location>
</feature>
<feature type="topological domain" description="Mitochondrial intermembrane" evidence="2">
    <location>
        <begin position="213"/>
        <end position="227"/>
    </location>
</feature>
<feature type="transmembrane region" description="Helical; Name=VI" evidence="2">
    <location>
        <begin position="228"/>
        <end position="261"/>
    </location>
</feature>
<feature type="topological domain" description="Mitochondrial matrix" evidence="2">
    <location>
        <begin position="262"/>
        <end position="269"/>
    </location>
</feature>
<feature type="transmembrane region" description="Helical; Name=VII" evidence="2">
    <location>
        <begin position="270"/>
        <end position="286"/>
    </location>
</feature>
<feature type="topological domain" description="Mitochondrial intermembrane" evidence="2">
    <location>
        <begin position="287"/>
        <end position="298"/>
    </location>
</feature>
<feature type="transmembrane region" description="Helical; Name=VIII" evidence="2">
    <location>
        <begin position="299"/>
        <end position="327"/>
    </location>
</feature>
<feature type="topological domain" description="Mitochondrial matrix" evidence="2">
    <location>
        <begin position="328"/>
        <end position="335"/>
    </location>
</feature>
<feature type="transmembrane region" description="Helical; Name=IX" evidence="2">
    <location>
        <begin position="336"/>
        <end position="357"/>
    </location>
</feature>
<feature type="topological domain" description="Mitochondrial intermembrane" evidence="2">
    <location>
        <begin position="358"/>
        <end position="370"/>
    </location>
</feature>
<feature type="transmembrane region" description="Helical; Name=X" evidence="2">
    <location>
        <begin position="371"/>
        <end position="400"/>
    </location>
</feature>
<feature type="topological domain" description="Mitochondrial matrix" evidence="2">
    <location>
        <begin position="401"/>
        <end position="406"/>
    </location>
</feature>
<feature type="transmembrane region" description="Helical; Name=XI" evidence="2">
    <location>
        <begin position="407"/>
        <end position="433"/>
    </location>
</feature>
<feature type="topological domain" description="Mitochondrial intermembrane" evidence="2">
    <location>
        <begin position="434"/>
        <end position="446"/>
    </location>
</feature>
<feature type="transmembrane region" description="Helical; Name=XII" evidence="2">
    <location>
        <begin position="447"/>
        <end position="478"/>
    </location>
</feature>
<feature type="topological domain" description="Mitochondrial matrix" evidence="2">
    <location>
        <begin position="479"/>
        <end position="519"/>
    </location>
</feature>
<feature type="binding site" evidence="2">
    <location>
        <position position="40"/>
    </location>
    <ligand>
        <name>Na(+)</name>
        <dbReference type="ChEBI" id="CHEBI:29101"/>
    </ligand>
</feature>
<feature type="binding site" evidence="2">
    <location>
        <position position="45"/>
    </location>
    <ligand>
        <name>Na(+)</name>
        <dbReference type="ChEBI" id="CHEBI:29101"/>
    </ligand>
</feature>
<feature type="binding site" description="axial binding residue" evidence="2">
    <location>
        <position position="61"/>
    </location>
    <ligand>
        <name>Fe(II)-heme a</name>
        <dbReference type="ChEBI" id="CHEBI:61715"/>
        <note>low-spin</note>
    </ligand>
    <ligandPart>
        <name>Fe</name>
        <dbReference type="ChEBI" id="CHEBI:18248"/>
    </ligandPart>
</feature>
<feature type="binding site" evidence="2">
    <location>
        <position position="240"/>
    </location>
    <ligand>
        <name>Cu cation</name>
        <dbReference type="ChEBI" id="CHEBI:23378"/>
        <label>B</label>
    </ligand>
</feature>
<feature type="binding site" evidence="2">
    <location>
        <position position="244"/>
    </location>
    <ligand>
        <name>O2</name>
        <dbReference type="ChEBI" id="CHEBI:15379"/>
    </ligand>
</feature>
<feature type="binding site" evidence="2">
    <location>
        <position position="290"/>
    </location>
    <ligand>
        <name>Cu cation</name>
        <dbReference type="ChEBI" id="CHEBI:23378"/>
        <label>B</label>
    </ligand>
</feature>
<feature type="binding site" evidence="2">
    <location>
        <position position="291"/>
    </location>
    <ligand>
        <name>Cu cation</name>
        <dbReference type="ChEBI" id="CHEBI:23378"/>
        <label>B</label>
    </ligand>
</feature>
<feature type="binding site" evidence="2">
    <location>
        <position position="368"/>
    </location>
    <ligand>
        <name>Mg(2+)</name>
        <dbReference type="ChEBI" id="CHEBI:18420"/>
        <note>ligand shared with MT-CO2</note>
    </ligand>
</feature>
<feature type="binding site" evidence="2">
    <location>
        <position position="369"/>
    </location>
    <ligand>
        <name>Mg(2+)</name>
        <dbReference type="ChEBI" id="CHEBI:18420"/>
        <note>ligand shared with MT-CO2</note>
    </ligand>
</feature>
<feature type="binding site" description="axial binding residue" evidence="2">
    <location>
        <position position="376"/>
    </location>
    <ligand>
        <name>heme a3</name>
        <dbReference type="ChEBI" id="CHEBI:83282"/>
        <note>high-spin</note>
    </ligand>
    <ligandPart>
        <name>Fe</name>
        <dbReference type="ChEBI" id="CHEBI:18248"/>
    </ligandPart>
</feature>
<feature type="binding site" description="axial binding residue" evidence="2">
    <location>
        <position position="378"/>
    </location>
    <ligand>
        <name>Fe(II)-heme a</name>
        <dbReference type="ChEBI" id="CHEBI:61715"/>
        <note>low-spin</note>
    </ligand>
    <ligandPart>
        <name>Fe</name>
        <dbReference type="ChEBI" id="CHEBI:18248"/>
    </ligandPart>
</feature>
<feature type="binding site" evidence="2">
    <location>
        <position position="441"/>
    </location>
    <ligand>
        <name>Na(+)</name>
        <dbReference type="ChEBI" id="CHEBI:29101"/>
    </ligand>
</feature>
<feature type="cross-link" description="1'-histidyl-3'-tyrosine (His-Tyr)" evidence="2">
    <location>
        <begin position="240"/>
        <end position="244"/>
    </location>
</feature>
<geneLocation type="mitochondrion"/>